<accession>Q9P2D6</accession>
<accession>A2RRQ5</accession>
<accession>Q3C0H3</accession>
<accession>Q5JXK0</accession>
<accession>Q5JXK1</accession>
<accession>Q68DW0</accession>
<accession>Q6P081</accession>
<accession>Q9H0F2</accession>
<accession>Q9NU48</accession>
<accession>Q9NUQ5</accession>
<accession>Q9NXL5</accession>
<comment type="alternative products">
    <event type="alternative splicing"/>
    <isoform>
        <id>Q9P2D6-1</id>
        <name>1</name>
        <sequence type="displayed"/>
    </isoform>
    <isoform>
        <id>Q9P2D6-2</id>
        <name>2</name>
        <sequence type="described" ref="VSP_030227"/>
    </isoform>
    <isoform>
        <id>Q9P2D6-3</id>
        <name>3</name>
        <sequence type="described" ref="VSP_030225 VSP_030226 VSP_030227"/>
    </isoform>
    <isoform>
        <id>Q9P2D6-4</id>
        <name>4</name>
        <sequence type="described" ref="VSP_030230"/>
    </isoform>
</comment>
<comment type="tissue specificity">
    <text evidence="4">Ubiquitous.</text>
</comment>
<comment type="similarity">
    <text evidence="8">Belongs to the FAM135 family.</text>
</comment>
<comment type="sequence caution" evidence="8">
    <conflict type="miscellaneous discrepancy">
        <sequence resource="EMBL-CDS" id="AAH65767"/>
    </conflict>
    <text>Intron retention.</text>
</comment>
<comment type="sequence caution" evidence="8">
    <conflict type="miscellaneous discrepancy">
        <sequence resource="EMBL-CDS" id="BAA90995"/>
    </conflict>
    <text>Intron retention.</text>
</comment>
<comment type="sequence caution" evidence="8">
    <conflict type="erroneous initiation">
        <sequence resource="EMBL-CDS" id="BAA92649"/>
    </conflict>
</comment>
<comment type="sequence caution" evidence="8">
    <conflict type="erroneous initiation">
        <sequence resource="EMBL-CDS" id="CAB66754"/>
    </conflict>
</comment>
<gene>
    <name type="primary">FAM135A</name>
    <name type="synonym">KIAA1411</name>
</gene>
<feature type="chain" id="PRO_0000314168" description="Protein FAM135A">
    <location>
        <begin position="1"/>
        <end position="1515"/>
    </location>
</feature>
<feature type="region of interest" description="Disordered" evidence="1">
    <location>
        <begin position="569"/>
        <end position="592"/>
    </location>
</feature>
<feature type="region of interest" description="Disordered" evidence="1">
    <location>
        <begin position="1062"/>
        <end position="1093"/>
    </location>
</feature>
<feature type="compositionally biased region" description="Polar residues" evidence="1">
    <location>
        <begin position="569"/>
        <end position="580"/>
    </location>
</feature>
<feature type="compositionally biased region" description="Acidic residues" evidence="1">
    <location>
        <begin position="1082"/>
        <end position="1091"/>
    </location>
</feature>
<feature type="splice variant" id="VSP_030225" description="In isoform 3." evidence="5 7">
    <location>
        <begin position="27"/>
        <end position="69"/>
    </location>
</feature>
<feature type="splice variant" id="VSP_030226" description="In isoform 3." evidence="5 7">
    <original>E</original>
    <variation>ELAKANMQLLYERLLRRKQLRTQKDNH</variation>
    <location>
        <position position="273"/>
    </location>
</feature>
<feature type="splice variant" id="VSP_030227" description="In isoform 2 and isoform 3." evidence="5 6 7">
    <location>
        <begin position="420"/>
        <end position="615"/>
    </location>
</feature>
<feature type="splice variant" id="VSP_030230" description="In isoform 4." evidence="5">
    <original>QIYSEMIHNLLRPVLQSKDCNLVRYNVINALPNTADSLIGRAAHIAVLDSEIFLEKFFLVAALKYFQ</original>
    <variation>NGIKLFQRVIGINELFPKFFL</variation>
    <location>
        <begin position="1449"/>
        <end position="1515"/>
    </location>
</feature>
<feature type="sequence variant" id="VAR_037854" description="In dbSNP:rs9455142.">
    <original>I</original>
    <variation>V</variation>
    <location>
        <position position="725"/>
    </location>
</feature>
<feature type="sequence variant" id="VAR_037855" description="In dbSNP:rs16869301.">
    <original>P</original>
    <variation>S</variation>
    <location>
        <position position="954"/>
    </location>
</feature>
<feature type="sequence variant" id="VAR_037856" description="In dbSNP:rs2747701." evidence="2 3 4">
    <original>D</original>
    <variation>G</variation>
    <location>
        <position position="1242"/>
    </location>
</feature>
<feature type="sequence conflict" description="In Ref. 2; CAH18110." evidence="8" ref="2">
    <original>A</original>
    <variation>T</variation>
    <location>
        <position position="738"/>
    </location>
</feature>
<feature type="sequence conflict" description="In Ref. 2; CAH18110." evidence="8" ref="2">
    <original>N</original>
    <variation>D</variation>
    <location>
        <position position="1330"/>
    </location>
</feature>
<name>F135A_HUMAN</name>
<evidence type="ECO:0000256" key="1">
    <source>
        <dbReference type="SAM" id="MobiDB-lite"/>
    </source>
</evidence>
<evidence type="ECO:0000269" key="2">
    <source>
    </source>
</evidence>
<evidence type="ECO:0000269" key="3">
    <source>
    </source>
</evidence>
<evidence type="ECO:0000269" key="4">
    <source>
    </source>
</evidence>
<evidence type="ECO:0000303" key="5">
    <source>
    </source>
</evidence>
<evidence type="ECO:0000303" key="6">
    <source>
    </source>
</evidence>
<evidence type="ECO:0000303" key="7">
    <source>
    </source>
</evidence>
<evidence type="ECO:0000305" key="8"/>
<organism>
    <name type="scientific">Homo sapiens</name>
    <name type="common">Human</name>
    <dbReference type="NCBI Taxonomy" id="9606"/>
    <lineage>
        <taxon>Eukaryota</taxon>
        <taxon>Metazoa</taxon>
        <taxon>Chordata</taxon>
        <taxon>Craniata</taxon>
        <taxon>Vertebrata</taxon>
        <taxon>Euteleostomi</taxon>
        <taxon>Mammalia</taxon>
        <taxon>Eutheria</taxon>
        <taxon>Euarchontoglires</taxon>
        <taxon>Primates</taxon>
        <taxon>Haplorrhini</taxon>
        <taxon>Catarrhini</taxon>
        <taxon>Hominidae</taxon>
        <taxon>Homo</taxon>
    </lineage>
</organism>
<proteinExistence type="evidence at protein level"/>
<reference key="1">
    <citation type="journal article" date="2000" name="DNA Res.">
        <title>Prediction of the coding sequences of unidentified human genes. XVI. The complete sequences of 150 new cDNA clones from brain which code for large proteins in vitro.</title>
        <authorList>
            <person name="Nagase T."/>
            <person name="Kikuno R."/>
            <person name="Ishikawa K."/>
            <person name="Hirosawa M."/>
            <person name="Ohara O."/>
        </authorList>
    </citation>
    <scope>NUCLEOTIDE SEQUENCE [LARGE SCALE MRNA] (ISOFORM 1)</scope>
    <source>
        <tissue>Brain</tissue>
    </source>
</reference>
<reference key="2">
    <citation type="journal article" date="2007" name="BMC Genomics">
        <title>The full-ORF clone resource of the German cDNA consortium.</title>
        <authorList>
            <person name="Bechtel S."/>
            <person name="Rosenfelder H."/>
            <person name="Duda A."/>
            <person name="Schmidt C.P."/>
            <person name="Ernst U."/>
            <person name="Wellenreuther R."/>
            <person name="Mehrle A."/>
            <person name="Schuster C."/>
            <person name="Bahr A."/>
            <person name="Bloecker H."/>
            <person name="Heubner D."/>
            <person name="Hoerlein A."/>
            <person name="Michel G."/>
            <person name="Wedler H."/>
            <person name="Koehrer K."/>
            <person name="Ottenwaelder B."/>
            <person name="Poustka A."/>
            <person name="Wiemann S."/>
            <person name="Schupp I."/>
        </authorList>
    </citation>
    <scope>NUCLEOTIDE SEQUENCE [LARGE SCALE MRNA] (ISOFORM 3)</scope>
    <source>
        <tissue>Testis</tissue>
    </source>
</reference>
<reference key="3">
    <citation type="journal article" date="2006" name="Nature">
        <title>DNA sequence and analysis of human chromosome 8.</title>
        <authorList>
            <person name="Nusbaum C."/>
            <person name="Mikkelsen T.S."/>
            <person name="Zody M.C."/>
            <person name="Asakawa S."/>
            <person name="Taudien S."/>
            <person name="Garber M."/>
            <person name="Kodira C.D."/>
            <person name="Schueler M.G."/>
            <person name="Shimizu A."/>
            <person name="Whittaker C.A."/>
            <person name="Chang J.L."/>
            <person name="Cuomo C.A."/>
            <person name="Dewar K."/>
            <person name="FitzGerald M.G."/>
            <person name="Yang X."/>
            <person name="Allen N.R."/>
            <person name="Anderson S."/>
            <person name="Asakawa T."/>
            <person name="Blechschmidt K."/>
            <person name="Bloom T."/>
            <person name="Borowsky M.L."/>
            <person name="Butler J."/>
            <person name="Cook A."/>
            <person name="Corum B."/>
            <person name="DeArellano K."/>
            <person name="DeCaprio D."/>
            <person name="Dooley K.T."/>
            <person name="Dorris L. III"/>
            <person name="Engels R."/>
            <person name="Gloeckner G."/>
            <person name="Hafez N."/>
            <person name="Hagopian D.S."/>
            <person name="Hall J.L."/>
            <person name="Ishikawa S.K."/>
            <person name="Jaffe D.B."/>
            <person name="Kamat A."/>
            <person name="Kudoh J."/>
            <person name="Lehmann R."/>
            <person name="Lokitsang T."/>
            <person name="Macdonald P."/>
            <person name="Major J.E."/>
            <person name="Matthews C.D."/>
            <person name="Mauceli E."/>
            <person name="Menzel U."/>
            <person name="Mihalev A.H."/>
            <person name="Minoshima S."/>
            <person name="Murayama Y."/>
            <person name="Naylor J.W."/>
            <person name="Nicol R."/>
            <person name="Nguyen C."/>
            <person name="O'Leary S.B."/>
            <person name="O'Neill K."/>
            <person name="Parker S.C.J."/>
            <person name="Polley A."/>
            <person name="Raymond C.K."/>
            <person name="Reichwald K."/>
            <person name="Rodriguez J."/>
            <person name="Sasaki T."/>
            <person name="Schilhabel M."/>
            <person name="Siddiqui R."/>
            <person name="Smith C.L."/>
            <person name="Sneddon T.P."/>
            <person name="Talamas J.A."/>
            <person name="Tenzin P."/>
            <person name="Topham K."/>
            <person name="Venkataraman V."/>
            <person name="Wen G."/>
            <person name="Yamazaki S."/>
            <person name="Young S.K."/>
            <person name="Zeng Q."/>
            <person name="Zimmer A.R."/>
            <person name="Rosenthal A."/>
            <person name="Birren B.W."/>
            <person name="Platzer M."/>
            <person name="Shimizu N."/>
            <person name="Lander E.S."/>
        </authorList>
    </citation>
    <scope>NUCLEOTIDE SEQUENCE [LARGE SCALE GENOMIC DNA]</scope>
</reference>
<reference key="4">
    <citation type="submission" date="2005-09" db="EMBL/GenBank/DDBJ databases">
        <authorList>
            <person name="Mural R.J."/>
            <person name="Istrail S."/>
            <person name="Sutton G.G."/>
            <person name="Florea L."/>
            <person name="Halpern A.L."/>
            <person name="Mobarry C.M."/>
            <person name="Lippert R."/>
            <person name="Walenz B."/>
            <person name="Shatkay H."/>
            <person name="Dew I."/>
            <person name="Miller J.R."/>
            <person name="Flanigan M.J."/>
            <person name="Edwards N.J."/>
            <person name="Bolanos R."/>
            <person name="Fasulo D."/>
            <person name="Halldorsson B.V."/>
            <person name="Hannenhalli S."/>
            <person name="Turner R."/>
            <person name="Yooseph S."/>
            <person name="Lu F."/>
            <person name="Nusskern D.R."/>
            <person name="Shue B.C."/>
            <person name="Zheng X.H."/>
            <person name="Zhong F."/>
            <person name="Delcher A.L."/>
            <person name="Huson D.H."/>
            <person name="Kravitz S.A."/>
            <person name="Mouchard L."/>
            <person name="Reinert K."/>
            <person name="Remington K.A."/>
            <person name="Clark A.G."/>
            <person name="Waterman M.S."/>
            <person name="Eichler E.E."/>
            <person name="Adams M.D."/>
            <person name="Hunkapiller M.W."/>
            <person name="Myers E.W."/>
            <person name="Venter J.C."/>
        </authorList>
    </citation>
    <scope>NUCLEOTIDE SEQUENCE [LARGE SCALE GENOMIC DNA]</scope>
</reference>
<reference key="5">
    <citation type="journal article" date="2004" name="Genome Res.">
        <title>The status, quality, and expansion of the NIH full-length cDNA project: the Mammalian Gene Collection (MGC).</title>
        <authorList>
            <consortium name="The MGC Project Team"/>
        </authorList>
    </citation>
    <scope>NUCLEOTIDE SEQUENCE [LARGE SCALE MRNA] (ISOFORM 2)</scope>
    <scope>NUCLEOTIDE SEQUENCE [LARGE SCALE MRNA] OF 1410-1515 (ISOFORMS 1/2/3)</scope>
    <scope>VARIANT GLY-1242</scope>
    <source>
        <tissue>Placenta</tissue>
    </source>
</reference>
<reference key="6">
    <citation type="journal article" date="2004" name="Nat. Genet.">
        <title>Complete sequencing and characterization of 21,243 full-length human cDNAs.</title>
        <authorList>
            <person name="Ota T."/>
            <person name="Suzuki Y."/>
            <person name="Nishikawa T."/>
            <person name="Otsuki T."/>
            <person name="Sugiyama T."/>
            <person name="Irie R."/>
            <person name="Wakamatsu A."/>
            <person name="Hayashi K."/>
            <person name="Sato H."/>
            <person name="Nagai K."/>
            <person name="Kimura K."/>
            <person name="Makita H."/>
            <person name="Sekine M."/>
            <person name="Obayashi M."/>
            <person name="Nishi T."/>
            <person name="Shibahara T."/>
            <person name="Tanaka T."/>
            <person name="Ishii S."/>
            <person name="Yamamoto J."/>
            <person name="Saito K."/>
            <person name="Kawai Y."/>
            <person name="Isono Y."/>
            <person name="Nakamura Y."/>
            <person name="Nagahari K."/>
            <person name="Murakami K."/>
            <person name="Yasuda T."/>
            <person name="Iwayanagi T."/>
            <person name="Wagatsuma M."/>
            <person name="Shiratori A."/>
            <person name="Sudo H."/>
            <person name="Hosoiri T."/>
            <person name="Kaku Y."/>
            <person name="Kodaira H."/>
            <person name="Kondo H."/>
            <person name="Sugawara M."/>
            <person name="Takahashi M."/>
            <person name="Kanda K."/>
            <person name="Yokoi T."/>
            <person name="Furuya T."/>
            <person name="Kikkawa E."/>
            <person name="Omura Y."/>
            <person name="Abe K."/>
            <person name="Kamihara K."/>
            <person name="Katsuta N."/>
            <person name="Sato K."/>
            <person name="Tanikawa M."/>
            <person name="Yamazaki M."/>
            <person name="Ninomiya K."/>
            <person name="Ishibashi T."/>
            <person name="Yamashita H."/>
            <person name="Murakawa K."/>
            <person name="Fujimori K."/>
            <person name="Tanai H."/>
            <person name="Kimata M."/>
            <person name="Watanabe M."/>
            <person name="Hiraoka S."/>
            <person name="Chiba Y."/>
            <person name="Ishida S."/>
            <person name="Ono Y."/>
            <person name="Takiguchi S."/>
            <person name="Watanabe S."/>
            <person name="Yosida M."/>
            <person name="Hotuta T."/>
            <person name="Kusano J."/>
            <person name="Kanehori K."/>
            <person name="Takahashi-Fujii A."/>
            <person name="Hara H."/>
            <person name="Tanase T.-O."/>
            <person name="Nomura Y."/>
            <person name="Togiya S."/>
            <person name="Komai F."/>
            <person name="Hara R."/>
            <person name="Takeuchi K."/>
            <person name="Arita M."/>
            <person name="Imose N."/>
            <person name="Musashino K."/>
            <person name="Yuuki H."/>
            <person name="Oshima A."/>
            <person name="Sasaki N."/>
            <person name="Aotsuka S."/>
            <person name="Yoshikawa Y."/>
            <person name="Matsunawa H."/>
            <person name="Ichihara T."/>
            <person name="Shiohata N."/>
            <person name="Sano S."/>
            <person name="Moriya S."/>
            <person name="Momiyama H."/>
            <person name="Satoh N."/>
            <person name="Takami S."/>
            <person name="Terashima Y."/>
            <person name="Suzuki O."/>
            <person name="Nakagawa S."/>
            <person name="Senoh A."/>
            <person name="Mizoguchi H."/>
            <person name="Goto Y."/>
            <person name="Shimizu F."/>
            <person name="Wakebe H."/>
            <person name="Hishigaki H."/>
            <person name="Watanabe T."/>
            <person name="Sugiyama A."/>
            <person name="Takemoto M."/>
            <person name="Kawakami B."/>
            <person name="Yamazaki M."/>
            <person name="Watanabe K."/>
            <person name="Kumagai A."/>
            <person name="Itakura S."/>
            <person name="Fukuzumi Y."/>
            <person name="Fujimori Y."/>
            <person name="Komiyama M."/>
            <person name="Tashiro H."/>
            <person name="Tanigami A."/>
            <person name="Fujiwara T."/>
            <person name="Ono T."/>
            <person name="Yamada K."/>
            <person name="Fujii Y."/>
            <person name="Ozaki K."/>
            <person name="Hirao M."/>
            <person name="Ohmori Y."/>
            <person name="Kawabata A."/>
            <person name="Hikiji T."/>
            <person name="Kobatake N."/>
            <person name="Inagaki H."/>
            <person name="Ikema Y."/>
            <person name="Okamoto S."/>
            <person name="Okitani R."/>
            <person name="Kawakami T."/>
            <person name="Noguchi S."/>
            <person name="Itoh T."/>
            <person name="Shigeta K."/>
            <person name="Senba T."/>
            <person name="Matsumura K."/>
            <person name="Nakajima Y."/>
            <person name="Mizuno T."/>
            <person name="Morinaga M."/>
            <person name="Sasaki M."/>
            <person name="Togashi T."/>
            <person name="Oyama M."/>
            <person name="Hata H."/>
            <person name="Watanabe M."/>
            <person name="Komatsu T."/>
            <person name="Mizushima-Sugano J."/>
            <person name="Satoh T."/>
            <person name="Shirai Y."/>
            <person name="Takahashi Y."/>
            <person name="Nakagawa K."/>
            <person name="Okumura K."/>
            <person name="Nagase T."/>
            <person name="Nomura N."/>
            <person name="Kikuchi H."/>
            <person name="Masuho Y."/>
            <person name="Yamashita R."/>
            <person name="Nakai K."/>
            <person name="Yada T."/>
            <person name="Nakamura Y."/>
            <person name="Ohara O."/>
            <person name="Isogai T."/>
            <person name="Sugano S."/>
        </authorList>
    </citation>
    <scope>NUCLEOTIDE SEQUENCE [LARGE SCALE MRNA] OF 17-419 (ISOFORM 3)</scope>
    <scope>NUCLEOTIDE SEQUENCE [LARGE SCALE MRNA] OF 902-1515 (ISOFORM 4)</scope>
    <scope>NUCLEOTIDE SEQUENCE [LARGE SCALE MRNA] OF 1324-1515 (ISOFORM 1)</scope>
    <source>
        <tissue>Colon</tissue>
        <tissue>Placenta</tissue>
    </source>
</reference>
<reference key="7">
    <citation type="journal article" date="2001" name="Genome Res.">
        <title>Towards a catalog of human genes and proteins: sequencing and analysis of 500 novel complete protein coding human cDNAs.</title>
        <authorList>
            <person name="Wiemann S."/>
            <person name="Weil B."/>
            <person name="Wellenreuther R."/>
            <person name="Gassenhuber J."/>
            <person name="Glassl S."/>
            <person name="Ansorge W."/>
            <person name="Boecher M."/>
            <person name="Bloecker H."/>
            <person name="Bauersachs S."/>
            <person name="Blum H."/>
            <person name="Lauber J."/>
            <person name="Duesterhoeft A."/>
            <person name="Beyer A."/>
            <person name="Koehrer K."/>
            <person name="Strack N."/>
            <person name="Mewes H.-W."/>
            <person name="Ottenwaelder B."/>
            <person name="Obermaier B."/>
            <person name="Tampe J."/>
            <person name="Heubner D."/>
            <person name="Wambutt R."/>
            <person name="Korn B."/>
            <person name="Klein M."/>
            <person name="Poustka A."/>
        </authorList>
    </citation>
    <scope>NUCLEOTIDE SEQUENCE [LARGE SCALE MRNA] OF 415-1515 (ISOFORM 1)</scope>
    <scope>VARIANT GLY-1242</scope>
    <source>
        <tissue>Testis</tissue>
    </source>
</reference>
<reference key="8">
    <citation type="journal article" date="2006" name="Ophthalmic Res.">
        <title>Exclusion of four candidate genes, KHDRBS2, PTP4A1, KIAA1411 and OGFRL1, as causative of autosomal recessive retinitis pigmentosa.</title>
        <authorList>
            <person name="Abd El-Aziz M.M."/>
            <person name="Patel R.J."/>
            <person name="El-Ashry M.F."/>
            <person name="Barragan I."/>
            <person name="Marcos I."/>
            <person name="Borrego S."/>
            <person name="Antinolo G."/>
            <person name="Bhattacharya S.S."/>
        </authorList>
    </citation>
    <scope>TISSUE SPECIFICITY</scope>
    <scope>VARIANT GLY-1242</scope>
</reference>
<reference key="9">
    <citation type="journal article" date="2009" name="Anal. Chem.">
        <title>Lys-N and trypsin cover complementary parts of the phosphoproteome in a refined SCX-based approach.</title>
        <authorList>
            <person name="Gauci S."/>
            <person name="Helbig A.O."/>
            <person name="Slijper M."/>
            <person name="Krijgsveld J."/>
            <person name="Heck A.J."/>
            <person name="Mohammed S."/>
        </authorList>
    </citation>
    <scope>IDENTIFICATION BY MASS SPECTROMETRY [LARGE SCALE ANALYSIS]</scope>
</reference>
<protein>
    <recommendedName>
        <fullName>Protein FAM135A</fullName>
    </recommendedName>
</protein>
<sequence length="1515" mass="169840">MTEVQAMVEFSVELNKFYNVDLFQRGFYQIRASMKIPSRIPHRVEASLLHATGMTLAFPASVHDSLICSKTFQILYKNEEVVLNDVMIFKVKMLLDERKIEETLEEMNFLLSLDLHFTDGDYSADDLNALQLISSRTLKLHFSPHRGLHHHVNVMFDYFHLSVVSVTVHASLVALHQPLISFPRPVKTTWLNRNAPAQNKDSVIPTLESVVFGINYTKQLSPDGCSFIIADSFLHHAYRFHYTLCATLLLAFKGLHSYFITVTEEIPSCQKLELEEMDVEARLTELCEEVKKIENPDELAELINMNLAQLCSLLMALWGQFLEVITLHEELRILLAQEHHTLRVRRFSEAFFCFEHPREAAIAYQELHAQSHLQMCTAIKNTSFCSSLPPLPIECSELDGDLNSLPIIFEDRYLDSVTEDLDAPWMGIQNLQRSESSKMDKYETEESSVAGLSSPELKVRPAGASSIWYTEGEKQLTKSLKGKNEESNKSKVKVTKLMKTMKSENTKKLIKQNSKDSVVLVGYKCLKSTASNDLIKCFEGNPSHSQKEGLDPTICGYNFDPKTYMRQTSQKEASCLPTNTERTEQKSPDIENVQPDQFDPLNSGNLNLCANLSISGKLDISQDDSEITQMEHNLASRRSSDDCHDHQTTPSLGVRTIEIKPSNKDPFSGENITVKLGPWTELRQEEILVDNLLPNFESLESNGKSKSIEITFEKEALQEAKCLSIGESLTKLRSNLPAPSTKEYHVVVSGDTIKLPDISATYASSRFSDSGVESEPSSFATHPNTDLVFETVQGQGPCNSERLFPQLLMKPDYNVKFSLGNHCTESTSAISEIQSSLTSINSLPSDDELSPDENSKKSVVPECHLNDSKTVLNLGTTDLPKCDDTKKSSITLQQQSVVFSGNLDNETVAIHSLNSSIKDPLQFVFSDEETSSDVKSSCSSKPNLDTMCKGFQSPDKSNNSTGTAITLNSKLICLGTPCVISGSISSNTDVSEDRTMKKNSDVLNLTQMYSEIPTVESETHLGTSDPFSASTDIVKQGLVENYFGSQSSTDISDTCAVSYSNALSPQKETSEKEISNLQQEQDKEDEEEEQDQQMVQNGYYEETDYSALDGTINAHYTSRDELMEERLTKSEKINSDYLRDGINMPTVCTSGCLSFPSAPRESPCNVKYSSKSKFDAITKQPSSTSYNFTSSISWYESSPKPQIQAFLQAKEELKLLKLPGFMYSEVPLLASSVPYFSVEEEDGSEDGVHLIVCVHGLDGNSADLRLVKTYIELGLPGGRIDFLMSERNQNDTFADFDSMTDRLLDEIIQYIQIYSLTVSKISFIGHSLGNLIIRSVLTRPRFKYYLNKLHTFLSLSGPHLGTLYNSSALVNTGLWFMQKWKKSGSLLQLTCRDHSDPRQTFLYKLSNKAGLHYFKNVVLVGSLQDRYVPYHSARIEMCKTALKDKQSGQIYSEMIHNLLRPVLQSKDCNLVRYNVINALPNTADSLIGRAAHIAVLDSEIFLEKFFLVAALKYFQ</sequence>
<dbReference type="EMBL" id="AB037832">
    <property type="protein sequence ID" value="BAA92649.1"/>
    <property type="status" value="ALT_INIT"/>
    <property type="molecule type" value="mRNA"/>
</dbReference>
<dbReference type="EMBL" id="CR749254">
    <property type="protein sequence ID" value="CAH18110.1"/>
    <property type="molecule type" value="mRNA"/>
</dbReference>
<dbReference type="EMBL" id="AL078591">
    <property type="status" value="NOT_ANNOTATED_CDS"/>
    <property type="molecule type" value="Genomic_DNA"/>
</dbReference>
<dbReference type="EMBL" id="CH471051">
    <property type="protein sequence ID" value="EAW48820.1"/>
    <property type="molecule type" value="Genomic_DNA"/>
</dbReference>
<dbReference type="EMBL" id="BC065767">
    <property type="protein sequence ID" value="AAH65767.1"/>
    <property type="status" value="ALT_SEQ"/>
    <property type="molecule type" value="mRNA"/>
</dbReference>
<dbReference type="EMBL" id="BC131782">
    <property type="protein sequence ID" value="AAI31783.1"/>
    <property type="molecule type" value="mRNA"/>
</dbReference>
<dbReference type="EMBL" id="AK000183">
    <property type="protein sequence ID" value="BAA90995.1"/>
    <property type="status" value="ALT_SEQ"/>
    <property type="molecule type" value="mRNA"/>
</dbReference>
<dbReference type="EMBL" id="AK002067">
    <property type="protein sequence ID" value="BAA92066.1"/>
    <property type="molecule type" value="mRNA"/>
</dbReference>
<dbReference type="EMBL" id="AK023639">
    <property type="status" value="NOT_ANNOTATED_CDS"/>
    <property type="molecule type" value="mRNA"/>
</dbReference>
<dbReference type="EMBL" id="AL136820">
    <property type="protein sequence ID" value="CAB66754.1"/>
    <property type="status" value="ALT_INIT"/>
    <property type="molecule type" value="mRNA"/>
</dbReference>
<dbReference type="CCDS" id="CCDS34481.1">
    <molecule id="Q9P2D6-3"/>
</dbReference>
<dbReference type="CCDS" id="CCDS47448.1">
    <molecule id="Q9P2D6-2"/>
</dbReference>
<dbReference type="CCDS" id="CCDS55028.1">
    <molecule id="Q9P2D6-1"/>
</dbReference>
<dbReference type="RefSeq" id="NP_001099001.1">
    <molecule id="Q9P2D6-2"/>
    <property type="nucleotide sequence ID" value="NM_001105531.3"/>
</dbReference>
<dbReference type="RefSeq" id="NP_001156001.1">
    <molecule id="Q9P2D6-1"/>
    <property type="nucleotide sequence ID" value="NM_001162529.3"/>
</dbReference>
<dbReference type="RefSeq" id="NP_001317926.1">
    <molecule id="Q9P2D6-2"/>
    <property type="nucleotide sequence ID" value="NM_001330997.3"/>
</dbReference>
<dbReference type="RefSeq" id="NP_001317930.1">
    <molecule id="Q9P2D6-2"/>
    <property type="nucleotide sequence ID" value="NM_001331001.3"/>
</dbReference>
<dbReference type="RefSeq" id="NP_001317931.1">
    <molecule id="Q9P2D6-2"/>
    <property type="nucleotide sequence ID" value="NM_001331002.3"/>
</dbReference>
<dbReference type="RefSeq" id="NP_001338529.1">
    <molecule id="Q9P2D6-1"/>
    <property type="nucleotide sequence ID" value="NM_001351600.2"/>
</dbReference>
<dbReference type="RefSeq" id="NP_001338531.1">
    <molecule id="Q9P2D6-1"/>
    <property type="nucleotide sequence ID" value="NM_001351602.2"/>
</dbReference>
<dbReference type="RefSeq" id="NP_001338536.1">
    <molecule id="Q9P2D6-1"/>
    <property type="nucleotide sequence ID" value="NM_001351607.2"/>
</dbReference>
<dbReference type="RefSeq" id="NP_065870.3">
    <molecule id="Q9P2D6-3"/>
    <property type="nucleotide sequence ID" value="NM_020819.4"/>
</dbReference>
<dbReference type="RefSeq" id="XP_016866614.1">
    <property type="nucleotide sequence ID" value="XM_017011125.1"/>
</dbReference>
<dbReference type="RefSeq" id="XP_016866615.1">
    <property type="nucleotide sequence ID" value="XM_017011126.1"/>
</dbReference>
<dbReference type="RefSeq" id="XP_016866616.1">
    <molecule id="Q9P2D6-1"/>
    <property type="nucleotide sequence ID" value="XM_017011127.2"/>
</dbReference>
<dbReference type="RefSeq" id="XP_047275115.1">
    <molecule id="Q9P2D6-1"/>
    <property type="nucleotide sequence ID" value="XM_047419159.1"/>
</dbReference>
<dbReference type="RefSeq" id="XP_047275116.1">
    <molecule id="Q9P2D6-1"/>
    <property type="nucleotide sequence ID" value="XM_047419160.1"/>
</dbReference>
<dbReference type="RefSeq" id="XP_047275122.1">
    <molecule id="Q9P2D6-2"/>
    <property type="nucleotide sequence ID" value="XM_047419166.1"/>
</dbReference>
<dbReference type="RefSeq" id="XP_047275123.1">
    <molecule id="Q9P2D6-2"/>
    <property type="nucleotide sequence ID" value="XM_047419167.1"/>
</dbReference>
<dbReference type="BioGRID" id="121632">
    <property type="interactions" value="90"/>
</dbReference>
<dbReference type="FunCoup" id="Q9P2D6">
    <property type="interactions" value="1336"/>
</dbReference>
<dbReference type="IntAct" id="Q9P2D6">
    <property type="interactions" value="33"/>
</dbReference>
<dbReference type="MINT" id="Q9P2D6"/>
<dbReference type="STRING" id="9606.ENSP00000410768"/>
<dbReference type="ESTHER" id="human-FAM135A">
    <property type="family name" value="Duf_676"/>
</dbReference>
<dbReference type="GlyGen" id="Q9P2D6">
    <property type="glycosylation" value="5 sites, 2 N-linked glycans (1 site), 1 O-linked glycan (4 sites)"/>
</dbReference>
<dbReference type="iPTMnet" id="Q9P2D6"/>
<dbReference type="PhosphoSitePlus" id="Q9P2D6"/>
<dbReference type="BioMuta" id="FAM135A"/>
<dbReference type="DMDM" id="166233529"/>
<dbReference type="jPOST" id="Q9P2D6"/>
<dbReference type="MassIVE" id="Q9P2D6"/>
<dbReference type="PaxDb" id="9606-ENSP00000410768"/>
<dbReference type="PeptideAtlas" id="Q9P2D6"/>
<dbReference type="ProteomicsDB" id="83778">
    <molecule id="Q9P2D6-1"/>
</dbReference>
<dbReference type="ProteomicsDB" id="83779">
    <molecule id="Q9P2D6-2"/>
</dbReference>
<dbReference type="ProteomicsDB" id="83780">
    <molecule id="Q9P2D6-3"/>
</dbReference>
<dbReference type="ProteomicsDB" id="83781">
    <molecule id="Q9P2D6-4"/>
</dbReference>
<dbReference type="Pumba" id="Q9P2D6"/>
<dbReference type="Antibodypedia" id="31231">
    <property type="antibodies" value="18 antibodies from 8 providers"/>
</dbReference>
<dbReference type="DNASU" id="57579"/>
<dbReference type="Ensembl" id="ENST00000361499.7">
    <molecule id="Q9P2D6-2"/>
    <property type="protein sequence ID" value="ENSP00000354913.3"/>
    <property type="gene ID" value="ENSG00000082269.17"/>
</dbReference>
<dbReference type="Ensembl" id="ENST00000370479.7">
    <molecule id="Q9P2D6-1"/>
    <property type="protein sequence ID" value="ENSP00000359510.4"/>
    <property type="gene ID" value="ENSG00000082269.17"/>
</dbReference>
<dbReference type="Ensembl" id="ENST00000418814.7">
    <molecule id="Q9P2D6-1"/>
    <property type="protein sequence ID" value="ENSP00000410768.2"/>
    <property type="gene ID" value="ENSG00000082269.17"/>
</dbReference>
<dbReference type="Ensembl" id="ENST00000457062.6">
    <molecule id="Q9P2D6-3"/>
    <property type="protein sequence ID" value="ENSP00000409201.2"/>
    <property type="gene ID" value="ENSG00000082269.17"/>
</dbReference>
<dbReference type="Ensembl" id="ENST00000505868.1">
    <molecule id="Q9P2D6-4"/>
    <property type="protein sequence ID" value="ENSP00000423307.1"/>
    <property type="gene ID" value="ENSG00000082269.17"/>
</dbReference>
<dbReference type="GeneID" id="57579"/>
<dbReference type="KEGG" id="hsa:57579"/>
<dbReference type="MANE-Select" id="ENST00000418814.7">
    <property type="protein sequence ID" value="ENSP00000410768.2"/>
    <property type="RefSeq nucleotide sequence ID" value="NM_001162529.3"/>
    <property type="RefSeq protein sequence ID" value="NP_001156001.1"/>
</dbReference>
<dbReference type="UCSC" id="uc003pfh.4">
    <molecule id="Q9P2D6-1"/>
    <property type="organism name" value="human"/>
</dbReference>
<dbReference type="AGR" id="HGNC:21084"/>
<dbReference type="CTD" id="57579"/>
<dbReference type="DisGeNET" id="57579"/>
<dbReference type="GeneCards" id="FAM135A"/>
<dbReference type="HGNC" id="HGNC:21084">
    <property type="gene designation" value="FAM135A"/>
</dbReference>
<dbReference type="HPA" id="ENSG00000082269">
    <property type="expression patterns" value="Tissue enhanced (esophagus)"/>
</dbReference>
<dbReference type="neXtProt" id="NX_Q9P2D6"/>
<dbReference type="OpenTargets" id="ENSG00000082269"/>
<dbReference type="PharmGKB" id="PA162386230"/>
<dbReference type="VEuPathDB" id="HostDB:ENSG00000082269"/>
<dbReference type="eggNOG" id="KOG2205">
    <property type="taxonomic scope" value="Eukaryota"/>
</dbReference>
<dbReference type="GeneTree" id="ENSGT00940000157565"/>
<dbReference type="InParanoid" id="Q9P2D6"/>
<dbReference type="OMA" id="TIHACLV"/>
<dbReference type="OrthoDB" id="273452at2759"/>
<dbReference type="PAN-GO" id="Q9P2D6">
    <property type="GO annotations" value="1 GO annotation based on evolutionary models"/>
</dbReference>
<dbReference type="PhylomeDB" id="Q9P2D6"/>
<dbReference type="TreeFam" id="TF314837"/>
<dbReference type="PathwayCommons" id="Q9P2D6"/>
<dbReference type="Reactome" id="R-HSA-9696273">
    <property type="pathway name" value="RND1 GTPase cycle"/>
</dbReference>
<dbReference type="SignaLink" id="Q9P2D6"/>
<dbReference type="BioGRID-ORCS" id="57579">
    <property type="hits" value="11 hits in 1156 CRISPR screens"/>
</dbReference>
<dbReference type="ChiTaRS" id="FAM135A">
    <property type="organism name" value="human"/>
</dbReference>
<dbReference type="GeneWiki" id="FAM135A"/>
<dbReference type="GenomeRNAi" id="57579"/>
<dbReference type="Pharos" id="Q9P2D6">
    <property type="development level" value="Tdark"/>
</dbReference>
<dbReference type="PRO" id="PR:Q9P2D6"/>
<dbReference type="Proteomes" id="UP000005640">
    <property type="component" value="Chromosome 6"/>
</dbReference>
<dbReference type="RNAct" id="Q9P2D6">
    <property type="molecule type" value="protein"/>
</dbReference>
<dbReference type="Bgee" id="ENSG00000082269">
    <property type="expression patterns" value="Expressed in esophagus squamous epithelium and 175 other cell types or tissues"/>
</dbReference>
<dbReference type="ExpressionAtlas" id="Q9P2D6">
    <property type="expression patterns" value="baseline and differential"/>
</dbReference>
<dbReference type="GO" id="GO:0006629">
    <property type="term" value="P:lipid metabolic process"/>
    <property type="evidence" value="ECO:0000318"/>
    <property type="project" value="GO_Central"/>
</dbReference>
<dbReference type="FunFam" id="3.40.50.1820:FF:000004">
    <property type="entry name" value="Protein FAM135A isoform a"/>
    <property type="match status" value="1"/>
</dbReference>
<dbReference type="Gene3D" id="3.40.50.1820">
    <property type="entry name" value="alpha/beta hydrolase"/>
    <property type="match status" value="1"/>
</dbReference>
<dbReference type="InterPro" id="IPR029058">
    <property type="entry name" value="AB_hydrolase_fold"/>
</dbReference>
<dbReference type="InterPro" id="IPR022122">
    <property type="entry name" value="DUF3657"/>
</dbReference>
<dbReference type="InterPro" id="IPR007751">
    <property type="entry name" value="DUF676_lipase-like"/>
</dbReference>
<dbReference type="InterPro" id="IPR044294">
    <property type="entry name" value="Lipase-like"/>
</dbReference>
<dbReference type="PANTHER" id="PTHR12482">
    <property type="entry name" value="LIPASE ROG1-RELATED-RELATED"/>
    <property type="match status" value="1"/>
</dbReference>
<dbReference type="PANTHER" id="PTHR12482:SF40">
    <property type="entry name" value="PROTEIN FAM135A"/>
    <property type="match status" value="1"/>
</dbReference>
<dbReference type="Pfam" id="PF12394">
    <property type="entry name" value="DUF3657"/>
    <property type="match status" value="1"/>
</dbReference>
<dbReference type="Pfam" id="PF05057">
    <property type="entry name" value="DUF676"/>
    <property type="match status" value="1"/>
</dbReference>
<dbReference type="SUPFAM" id="SSF53474">
    <property type="entry name" value="alpha/beta-Hydrolases"/>
    <property type="match status" value="1"/>
</dbReference>
<keyword id="KW-0025">Alternative splicing</keyword>
<keyword id="KW-1267">Proteomics identification</keyword>
<keyword id="KW-1185">Reference proteome</keyword>